<organism>
    <name type="scientific">Rhodopseudomonas palustris (strain ATCC BAA-98 / CGA009)</name>
    <dbReference type="NCBI Taxonomy" id="258594"/>
    <lineage>
        <taxon>Bacteria</taxon>
        <taxon>Pseudomonadati</taxon>
        <taxon>Pseudomonadota</taxon>
        <taxon>Alphaproteobacteria</taxon>
        <taxon>Hyphomicrobiales</taxon>
        <taxon>Nitrobacteraceae</taxon>
        <taxon>Rhodopseudomonas</taxon>
    </lineage>
</organism>
<protein>
    <recommendedName>
        <fullName evidence="1">Glutaminase</fullName>
        <ecNumber evidence="1">3.5.1.2</ecNumber>
    </recommendedName>
</protein>
<keyword id="KW-0378">Hydrolase</keyword>
<comment type="catalytic activity">
    <reaction evidence="1">
        <text>L-glutamine + H2O = L-glutamate + NH4(+)</text>
        <dbReference type="Rhea" id="RHEA:15889"/>
        <dbReference type="ChEBI" id="CHEBI:15377"/>
        <dbReference type="ChEBI" id="CHEBI:28938"/>
        <dbReference type="ChEBI" id="CHEBI:29985"/>
        <dbReference type="ChEBI" id="CHEBI:58359"/>
        <dbReference type="EC" id="3.5.1.2"/>
    </reaction>
</comment>
<comment type="subunit">
    <text evidence="1">Homotetramer.</text>
</comment>
<comment type="similarity">
    <text evidence="1">Belongs to the glutaminase family.</text>
</comment>
<feature type="chain" id="PRO_1000048350" description="Glutaminase">
    <location>
        <begin position="1"/>
        <end position="311"/>
    </location>
</feature>
<feature type="binding site" evidence="1">
    <location>
        <position position="66"/>
    </location>
    <ligand>
        <name>substrate</name>
    </ligand>
</feature>
<feature type="binding site" evidence="1">
    <location>
        <position position="116"/>
    </location>
    <ligand>
        <name>substrate</name>
    </ligand>
</feature>
<feature type="binding site" evidence="1">
    <location>
        <position position="162"/>
    </location>
    <ligand>
        <name>substrate</name>
    </ligand>
</feature>
<feature type="binding site" evidence="1">
    <location>
        <position position="169"/>
    </location>
    <ligand>
        <name>substrate</name>
    </ligand>
</feature>
<feature type="binding site" evidence="1">
    <location>
        <position position="193"/>
    </location>
    <ligand>
        <name>substrate</name>
    </ligand>
</feature>
<feature type="binding site" evidence="1">
    <location>
        <position position="245"/>
    </location>
    <ligand>
        <name>substrate</name>
    </ligand>
</feature>
<feature type="binding site" evidence="1">
    <location>
        <position position="263"/>
    </location>
    <ligand>
        <name>substrate</name>
    </ligand>
</feature>
<gene>
    <name evidence="1" type="primary">glsA</name>
    <name type="ordered locus">RPA4211</name>
</gene>
<dbReference type="EC" id="3.5.1.2" evidence="1"/>
<dbReference type="EMBL" id="BX572606">
    <property type="protein sequence ID" value="CAE29652.1"/>
    <property type="molecule type" value="Genomic_DNA"/>
</dbReference>
<dbReference type="RefSeq" id="WP_011159746.1">
    <property type="nucleotide sequence ID" value="NZ_CP116810.1"/>
</dbReference>
<dbReference type="SMR" id="Q6N239"/>
<dbReference type="STRING" id="258594.RPA4211"/>
<dbReference type="GeneID" id="66895337"/>
<dbReference type="eggNOG" id="COG2066">
    <property type="taxonomic scope" value="Bacteria"/>
</dbReference>
<dbReference type="HOGENOM" id="CLU_027932_1_1_5"/>
<dbReference type="PhylomeDB" id="Q6N239"/>
<dbReference type="GO" id="GO:0004359">
    <property type="term" value="F:glutaminase activity"/>
    <property type="evidence" value="ECO:0007669"/>
    <property type="project" value="UniProtKB-UniRule"/>
</dbReference>
<dbReference type="GO" id="GO:0006537">
    <property type="term" value="P:glutamate biosynthetic process"/>
    <property type="evidence" value="ECO:0007669"/>
    <property type="project" value="TreeGrafter"/>
</dbReference>
<dbReference type="GO" id="GO:0006543">
    <property type="term" value="P:glutamine catabolic process"/>
    <property type="evidence" value="ECO:0007669"/>
    <property type="project" value="TreeGrafter"/>
</dbReference>
<dbReference type="FunFam" id="3.40.710.10:FF:000005">
    <property type="entry name" value="Glutaminase"/>
    <property type="match status" value="1"/>
</dbReference>
<dbReference type="Gene3D" id="3.40.710.10">
    <property type="entry name" value="DD-peptidase/beta-lactamase superfamily"/>
    <property type="match status" value="1"/>
</dbReference>
<dbReference type="HAMAP" id="MF_00313">
    <property type="entry name" value="Glutaminase"/>
    <property type="match status" value="1"/>
</dbReference>
<dbReference type="InterPro" id="IPR012338">
    <property type="entry name" value="Beta-lactam/transpept-like"/>
</dbReference>
<dbReference type="InterPro" id="IPR015868">
    <property type="entry name" value="Glutaminase"/>
</dbReference>
<dbReference type="NCBIfam" id="TIGR03814">
    <property type="entry name" value="Gln_ase"/>
    <property type="match status" value="1"/>
</dbReference>
<dbReference type="NCBIfam" id="NF002133">
    <property type="entry name" value="PRK00971.1-2"/>
    <property type="match status" value="1"/>
</dbReference>
<dbReference type="PANTHER" id="PTHR12544">
    <property type="entry name" value="GLUTAMINASE"/>
    <property type="match status" value="1"/>
</dbReference>
<dbReference type="PANTHER" id="PTHR12544:SF29">
    <property type="entry name" value="GLUTAMINASE"/>
    <property type="match status" value="1"/>
</dbReference>
<dbReference type="Pfam" id="PF04960">
    <property type="entry name" value="Glutaminase"/>
    <property type="match status" value="1"/>
</dbReference>
<dbReference type="SUPFAM" id="SSF56601">
    <property type="entry name" value="beta-lactamase/transpeptidase-like"/>
    <property type="match status" value="1"/>
</dbReference>
<proteinExistence type="inferred from homology"/>
<sequence>MSNQLLDRVVAEIADEMAQRADRGEVASYIPELARVDPKAFGLAVIGADGHIAAAGDADVPFSIQSISKVFTLTLALGKAGDRLWRRVGREPSGSAFNSIVQLEHERGIPRNPFINAGAIAVTDLILSGHQPREALGEILRFMQFLAGDSSIAIDEAVAKSEQRTGFRNAALANYMKSFGVLDNPVEYTLGVYFHHCAIAMSCRQLAMAGRFLAHNGQNPSTGLNVVSSERARRINALMLTCGHYDGSGEFAYRVGLPGKSGVGGGILAVAPGRASIAVWAPGLDAAGNSHLGRVALEGLTKRMGWSIFGV</sequence>
<evidence type="ECO:0000255" key="1">
    <source>
        <dbReference type="HAMAP-Rule" id="MF_00313"/>
    </source>
</evidence>
<accession>Q6N239</accession>
<reference key="1">
    <citation type="journal article" date="2004" name="Nat. Biotechnol.">
        <title>Complete genome sequence of the metabolically versatile photosynthetic bacterium Rhodopseudomonas palustris.</title>
        <authorList>
            <person name="Larimer F.W."/>
            <person name="Chain P."/>
            <person name="Hauser L."/>
            <person name="Lamerdin J.E."/>
            <person name="Malfatti S."/>
            <person name="Do L."/>
            <person name="Land M.L."/>
            <person name="Pelletier D.A."/>
            <person name="Beatty J.T."/>
            <person name="Lang A.S."/>
            <person name="Tabita F.R."/>
            <person name="Gibson J.L."/>
            <person name="Hanson T.E."/>
            <person name="Bobst C."/>
            <person name="Torres y Torres J.L."/>
            <person name="Peres C."/>
            <person name="Harrison F.H."/>
            <person name="Gibson J."/>
            <person name="Harwood C.S."/>
        </authorList>
    </citation>
    <scope>NUCLEOTIDE SEQUENCE [LARGE SCALE GENOMIC DNA]</scope>
    <source>
        <strain>ATCC BAA-98 / CGA009</strain>
    </source>
</reference>
<name>GLSA_RHOPA</name>